<name>BAMA_SHIBS</name>
<proteinExistence type="inferred from homology"/>
<protein>
    <recommendedName>
        <fullName evidence="1">Outer membrane protein assembly factor BamA</fullName>
    </recommendedName>
</protein>
<sequence>MAMKKLLIASLLFSSATVYGAEGFVVKDIHFEGLQRVAVGAALLSMPVRTGDTVNDEDISNTIRALFATGNFEDVRVLRDGDTLLVQVKERPTIASITFSGNKSVKDDMLKQNLEASGVRVGESLDRTTIADIEKGLEDFYYSVGKYSASVKAVVTPLPRNRVDLKLVFQEGVSAEIQQINIVGNHAFTTDELISHFQLRDEVPWWNVVGDRKYQKQKLAGDLETLRSYYLDRGYARFNIDSTQVSLTPDKKGIYVTVNITEGDQYKLSGVEVSGNLAGHSAEIEQLTKIEPGELYNGTKVTKMEDDIKKLLGRYGYAYPRVQSMPEINDADKTVKLRVNVDAGNRFYVRKIRFEGNDTSKDAVLRREMRQMEGAWLGSDLVDQGKERLNRLGFFETVDTDTQRVPGSPDQVDVVYKVKERNTGSFNFGIGYGTESGVSFQAGVQQDNWLGTGYAVGINGTKNDYQTYAELSVTNPYFTVDGVSLGGRLFYNDFQADDADLSDYTNKSYGTDVTLGFPINEYNSLRAGLGYVHNSLSNMQPQVAMWRYLYSMGEHPSTSDQDNSFKTDDFTFNYGWTYNKLDRGYFPTDGSRVNLTGKVTIPGSDNEYYKVTLDTATYVPIDDDHKWVVLGRTRWGYGDGLGGKEMPFYENFYAGGSSTVRGFQSNTIGPKAVYFPHQASNYDPDYDYECATQDGAKDLCKSDDAVGGNAMAVASLEFITPTPFISDKYANSVRTSFFWDMGTVWDTNWDSSQYSGYPDYSDPSNIRMSAGIALQWMSPLGPLVFSYAQPFKKYDGDKAEQFQFNIGKTW</sequence>
<reference key="1">
    <citation type="journal article" date="2005" name="Nucleic Acids Res.">
        <title>Genome dynamics and diversity of Shigella species, the etiologic agents of bacillary dysentery.</title>
        <authorList>
            <person name="Yang F."/>
            <person name="Yang J."/>
            <person name="Zhang X."/>
            <person name="Chen L."/>
            <person name="Jiang Y."/>
            <person name="Yan Y."/>
            <person name="Tang X."/>
            <person name="Wang J."/>
            <person name="Xiong Z."/>
            <person name="Dong J."/>
            <person name="Xue Y."/>
            <person name="Zhu Y."/>
            <person name="Xu X."/>
            <person name="Sun L."/>
            <person name="Chen S."/>
            <person name="Nie H."/>
            <person name="Peng J."/>
            <person name="Xu J."/>
            <person name="Wang Y."/>
            <person name="Yuan Z."/>
            <person name="Wen Y."/>
            <person name="Yao Z."/>
            <person name="Shen Y."/>
            <person name="Qiang B."/>
            <person name="Hou Y."/>
            <person name="Yu J."/>
            <person name="Jin Q."/>
        </authorList>
    </citation>
    <scope>NUCLEOTIDE SEQUENCE [LARGE SCALE GENOMIC DNA]</scope>
    <source>
        <strain>Sb227</strain>
    </source>
</reference>
<organism>
    <name type="scientific">Shigella boydii serotype 4 (strain Sb227)</name>
    <dbReference type="NCBI Taxonomy" id="300268"/>
    <lineage>
        <taxon>Bacteria</taxon>
        <taxon>Pseudomonadati</taxon>
        <taxon>Pseudomonadota</taxon>
        <taxon>Gammaproteobacteria</taxon>
        <taxon>Enterobacterales</taxon>
        <taxon>Enterobacteriaceae</taxon>
        <taxon>Shigella</taxon>
    </lineage>
</organism>
<comment type="function">
    <text evidence="1">Part of the outer membrane protein assembly complex, which is involved in assembly and insertion of beta-barrel proteins into the outer membrane. Constitutes, with BamD, the core component of the assembly machinery.</text>
</comment>
<comment type="subunit">
    <text evidence="1">Part of the Bam complex, which is composed of the outer membrane protein BamA, and four lipoproteins BamB, BamC, BamD and BamE.</text>
</comment>
<comment type="subcellular location">
    <subcellularLocation>
        <location evidence="1">Cell outer membrane</location>
    </subcellularLocation>
</comment>
<comment type="similarity">
    <text evidence="1">Belongs to the BamA family.</text>
</comment>
<evidence type="ECO:0000255" key="1">
    <source>
        <dbReference type="HAMAP-Rule" id="MF_01430"/>
    </source>
</evidence>
<evidence type="ECO:0000255" key="2">
    <source>
        <dbReference type="PROSITE-ProRule" id="PRU01115"/>
    </source>
</evidence>
<feature type="signal peptide" evidence="1">
    <location>
        <begin position="1"/>
        <end position="20"/>
    </location>
</feature>
<feature type="chain" id="PRO_1000024389" description="Outer membrane protein assembly factor BamA">
    <location>
        <begin position="21"/>
        <end position="810"/>
    </location>
</feature>
<feature type="domain" description="POTRA 1" evidence="2">
    <location>
        <begin position="24"/>
        <end position="91"/>
    </location>
</feature>
<feature type="domain" description="POTRA 2" evidence="2">
    <location>
        <begin position="92"/>
        <end position="172"/>
    </location>
</feature>
<feature type="domain" description="POTRA 3" evidence="2">
    <location>
        <begin position="175"/>
        <end position="263"/>
    </location>
</feature>
<feature type="domain" description="POTRA 4" evidence="2">
    <location>
        <begin position="266"/>
        <end position="344"/>
    </location>
</feature>
<feature type="domain" description="POTRA 5" evidence="2">
    <location>
        <begin position="347"/>
        <end position="421"/>
    </location>
</feature>
<accession>Q325W3</accession>
<dbReference type="EMBL" id="CP000036">
    <property type="protein sequence ID" value="ABB64895.1"/>
    <property type="molecule type" value="Genomic_DNA"/>
</dbReference>
<dbReference type="RefSeq" id="WP_001240896.1">
    <property type="nucleotide sequence ID" value="NC_007613.1"/>
</dbReference>
<dbReference type="SMR" id="Q325W3"/>
<dbReference type="GeneID" id="93777248"/>
<dbReference type="KEGG" id="sbo:SBO_0165"/>
<dbReference type="HOGENOM" id="CLU_007664_1_0_6"/>
<dbReference type="Proteomes" id="UP000007067">
    <property type="component" value="Chromosome"/>
</dbReference>
<dbReference type="GO" id="GO:1990063">
    <property type="term" value="C:Bam protein complex"/>
    <property type="evidence" value="ECO:0007669"/>
    <property type="project" value="TreeGrafter"/>
</dbReference>
<dbReference type="GO" id="GO:0043165">
    <property type="term" value="P:Gram-negative-bacterium-type cell outer membrane assembly"/>
    <property type="evidence" value="ECO:0007669"/>
    <property type="project" value="UniProtKB-UniRule"/>
</dbReference>
<dbReference type="GO" id="GO:0051205">
    <property type="term" value="P:protein insertion into membrane"/>
    <property type="evidence" value="ECO:0007669"/>
    <property type="project" value="UniProtKB-UniRule"/>
</dbReference>
<dbReference type="FunFam" id="2.40.160.50:FF:000001">
    <property type="entry name" value="Outer membrane protein assembly factor BamA"/>
    <property type="match status" value="1"/>
</dbReference>
<dbReference type="FunFam" id="3.10.20.310:FF:000001">
    <property type="entry name" value="Outer membrane protein assembly factor BamA"/>
    <property type="match status" value="1"/>
</dbReference>
<dbReference type="FunFam" id="3.10.20.310:FF:000002">
    <property type="entry name" value="Outer membrane protein assembly factor BamA"/>
    <property type="match status" value="1"/>
</dbReference>
<dbReference type="FunFam" id="3.10.20.310:FF:000003">
    <property type="entry name" value="Outer membrane protein assembly factor BamA"/>
    <property type="match status" value="1"/>
</dbReference>
<dbReference type="FunFam" id="3.10.20.310:FF:000004">
    <property type="entry name" value="Outer membrane protein assembly factor BamA"/>
    <property type="match status" value="1"/>
</dbReference>
<dbReference type="FunFam" id="3.10.20.310:FF:000005">
    <property type="entry name" value="Outer membrane protein assembly factor BamA"/>
    <property type="match status" value="1"/>
</dbReference>
<dbReference type="Gene3D" id="3.10.20.310">
    <property type="entry name" value="membrane protein fhac"/>
    <property type="match status" value="5"/>
</dbReference>
<dbReference type="Gene3D" id="2.40.160.50">
    <property type="entry name" value="membrane protein fhac: a member of the omp85/tpsb transporter family"/>
    <property type="match status" value="1"/>
</dbReference>
<dbReference type="HAMAP" id="MF_01430">
    <property type="entry name" value="OM_assembly_BamA"/>
    <property type="match status" value="1"/>
</dbReference>
<dbReference type="InterPro" id="IPR000184">
    <property type="entry name" value="Bac_surfAg_D15"/>
</dbReference>
<dbReference type="InterPro" id="IPR010827">
    <property type="entry name" value="BamA/TamA_POTRA"/>
</dbReference>
<dbReference type="InterPro" id="IPR039910">
    <property type="entry name" value="D15-like"/>
</dbReference>
<dbReference type="InterPro" id="IPR023707">
    <property type="entry name" value="OM_assembly_BamA"/>
</dbReference>
<dbReference type="InterPro" id="IPR034746">
    <property type="entry name" value="POTRA"/>
</dbReference>
<dbReference type="NCBIfam" id="TIGR03303">
    <property type="entry name" value="OM_YaeT"/>
    <property type="match status" value="1"/>
</dbReference>
<dbReference type="NCBIfam" id="NF008287">
    <property type="entry name" value="PRK11067.1"/>
    <property type="match status" value="1"/>
</dbReference>
<dbReference type="PANTHER" id="PTHR12815:SF23">
    <property type="entry name" value="OUTER MEMBRANE PROTEIN ASSEMBLY FACTOR BAMA"/>
    <property type="match status" value="1"/>
</dbReference>
<dbReference type="PANTHER" id="PTHR12815">
    <property type="entry name" value="SORTING AND ASSEMBLY MACHINERY SAMM50 PROTEIN FAMILY MEMBER"/>
    <property type="match status" value="1"/>
</dbReference>
<dbReference type="Pfam" id="PF01103">
    <property type="entry name" value="Omp85"/>
    <property type="match status" value="1"/>
</dbReference>
<dbReference type="Pfam" id="PF07244">
    <property type="entry name" value="POTRA"/>
    <property type="match status" value="4"/>
</dbReference>
<dbReference type="PIRSF" id="PIRSF006076">
    <property type="entry name" value="OM_assembly_OMP85"/>
    <property type="match status" value="1"/>
</dbReference>
<dbReference type="PROSITE" id="PS51779">
    <property type="entry name" value="POTRA"/>
    <property type="match status" value="5"/>
</dbReference>
<keyword id="KW-0998">Cell outer membrane</keyword>
<keyword id="KW-0472">Membrane</keyword>
<keyword id="KW-0677">Repeat</keyword>
<keyword id="KW-0732">Signal</keyword>
<keyword id="KW-0812">Transmembrane</keyword>
<keyword id="KW-1134">Transmembrane beta strand</keyword>
<gene>
    <name evidence="1" type="primary">bamA</name>
    <name type="synonym">yaeT</name>
    <name type="ordered locus">SBO_0165</name>
</gene>